<evidence type="ECO:0000255" key="1">
    <source>
        <dbReference type="HAMAP-Rule" id="MF_01399"/>
    </source>
</evidence>
<dbReference type="EMBL" id="U38804">
    <property type="protein sequence ID" value="AAC08131.1"/>
    <property type="molecule type" value="Genomic_DNA"/>
</dbReference>
<dbReference type="PIR" id="S73166">
    <property type="entry name" value="S73166"/>
</dbReference>
<dbReference type="RefSeq" id="NP_053855.1">
    <property type="nucleotide sequence ID" value="NC_000925.1"/>
</dbReference>
<dbReference type="SMR" id="P51245"/>
<dbReference type="GeneID" id="809874"/>
<dbReference type="GO" id="GO:0009535">
    <property type="term" value="C:chloroplast thylakoid membrane"/>
    <property type="evidence" value="ECO:0007669"/>
    <property type="project" value="UniProtKB-SubCell"/>
</dbReference>
<dbReference type="GO" id="GO:0045259">
    <property type="term" value="C:proton-transporting ATP synthase complex"/>
    <property type="evidence" value="ECO:0007669"/>
    <property type="project" value="UniProtKB-KW"/>
</dbReference>
<dbReference type="GO" id="GO:0005524">
    <property type="term" value="F:ATP binding"/>
    <property type="evidence" value="ECO:0007669"/>
    <property type="project" value="UniProtKB-KW"/>
</dbReference>
<dbReference type="GO" id="GO:0046933">
    <property type="term" value="F:proton-transporting ATP synthase activity, rotational mechanism"/>
    <property type="evidence" value="ECO:0007669"/>
    <property type="project" value="UniProtKB-UniRule"/>
</dbReference>
<dbReference type="GO" id="GO:0046961">
    <property type="term" value="F:proton-transporting ATPase activity, rotational mechanism"/>
    <property type="evidence" value="ECO:0007669"/>
    <property type="project" value="TreeGrafter"/>
</dbReference>
<dbReference type="CDD" id="cd06503">
    <property type="entry name" value="ATP-synt_Fo_b"/>
    <property type="match status" value="1"/>
</dbReference>
<dbReference type="HAMAP" id="MF_01398">
    <property type="entry name" value="ATP_synth_b_bprime"/>
    <property type="match status" value="1"/>
</dbReference>
<dbReference type="HAMAP" id="MF_01399">
    <property type="entry name" value="ATP_synth_bprime"/>
    <property type="match status" value="1"/>
</dbReference>
<dbReference type="InterPro" id="IPR034679">
    <property type="entry name" value="ATP_synth_b"/>
</dbReference>
<dbReference type="InterPro" id="IPR002146">
    <property type="entry name" value="ATP_synth_b/b'su_bac/chlpt"/>
</dbReference>
<dbReference type="InterPro" id="IPR050059">
    <property type="entry name" value="ATP_synthase_B_chain"/>
</dbReference>
<dbReference type="NCBIfam" id="NF005607">
    <property type="entry name" value="PRK07353.1"/>
    <property type="match status" value="1"/>
</dbReference>
<dbReference type="PANTHER" id="PTHR33445">
    <property type="entry name" value="ATP SYNTHASE SUBUNIT B', CHLOROPLASTIC"/>
    <property type="match status" value="1"/>
</dbReference>
<dbReference type="PANTHER" id="PTHR33445:SF2">
    <property type="entry name" value="ATP SYNTHASE SUBUNIT B', CHLOROPLASTIC"/>
    <property type="match status" value="1"/>
</dbReference>
<dbReference type="Pfam" id="PF00430">
    <property type="entry name" value="ATP-synt_B"/>
    <property type="match status" value="1"/>
</dbReference>
<organism>
    <name type="scientific">Porphyra purpurea</name>
    <name type="common">Red seaweed</name>
    <name type="synonym">Ulva purpurea</name>
    <dbReference type="NCBI Taxonomy" id="2787"/>
    <lineage>
        <taxon>Eukaryota</taxon>
        <taxon>Rhodophyta</taxon>
        <taxon>Bangiophyceae</taxon>
        <taxon>Bangiales</taxon>
        <taxon>Bangiaceae</taxon>
        <taxon>Porphyra</taxon>
    </lineage>
</organism>
<feature type="chain" id="PRO_0000082438" description="ATP synthase subunit b', chloroplastic">
    <location>
        <begin position="1"/>
        <end position="158"/>
    </location>
</feature>
<feature type="transmembrane region" description="Helical" evidence="1">
    <location>
        <begin position="21"/>
        <end position="41"/>
    </location>
</feature>
<reference key="1">
    <citation type="journal article" date="1995" name="Plant Mol. Biol. Rep.">
        <title>Complete nucleotide sequence of the Porphyra purpurea chloroplast genome.</title>
        <authorList>
            <person name="Reith M.E."/>
            <person name="Munholland J."/>
        </authorList>
    </citation>
    <scope>NUCLEOTIDE SEQUENCE [LARGE SCALE GENOMIC DNA]</scope>
    <source>
        <strain>Avonport</strain>
    </source>
</reference>
<comment type="function">
    <text evidence="1">F(1)F(0) ATP synthase produces ATP from ADP in the presence of a proton or sodium gradient. F-type ATPases consist of two structural domains, F(1) containing the extramembraneous catalytic core and F(0) containing the membrane proton channel, linked together by a central stalk and a peripheral stalk. During catalysis, ATP synthesis in the catalytic domain of F(1) is coupled via a rotary mechanism of the central stalk subunits to proton translocation.</text>
</comment>
<comment type="function">
    <text evidence="1">Component of the F(0) channel, it forms part of the peripheral stalk, linking F(1) to F(0). The b'-subunit is a diverged and duplicated form of b found in plants and photosynthetic bacteria.</text>
</comment>
<comment type="subunit">
    <text evidence="1">F-type ATPases have 2 components, F(1) - the catalytic core - and F(0) - the membrane proton channel. F(1) has five subunits: alpha(3), beta(3), gamma(1), delta(1), epsilon(1). F(0) has four main subunits: a(1), b(1), b'(1) and c(10-14). The alpha and beta chains form an alternating ring which encloses part of the gamma chain. F(1) is attached to F(0) by a central stalk formed by the gamma and epsilon chains, while a peripheral stalk is formed by the delta, b and b' chains.</text>
</comment>
<comment type="subcellular location">
    <subcellularLocation>
        <location evidence="1">Plastid</location>
        <location evidence="1">Chloroplast thylakoid membrane</location>
        <topology evidence="1">Single-pass membrane protein</topology>
    </subcellularLocation>
</comment>
<comment type="miscellaneous">
    <text>In plastids the F-type ATPase is also known as CF(1)CF(0).</text>
</comment>
<comment type="similarity">
    <text evidence="1">Belongs to the ATPase B chain family.</text>
</comment>
<name>ATPF2_PORPU</name>
<geneLocation type="chloroplast"/>
<keyword id="KW-0066">ATP synthesis</keyword>
<keyword id="KW-0067">ATP-binding</keyword>
<keyword id="KW-0138">CF(0)</keyword>
<keyword id="KW-0150">Chloroplast</keyword>
<keyword id="KW-0375">Hydrogen ion transport</keyword>
<keyword id="KW-0406">Ion transport</keyword>
<keyword id="KW-0472">Membrane</keyword>
<keyword id="KW-0547">Nucleotide-binding</keyword>
<keyword id="KW-0934">Plastid</keyword>
<keyword id="KW-0793">Thylakoid</keyword>
<keyword id="KW-0812">Transmembrane</keyword>
<keyword id="KW-1133">Transmembrane helix</keyword>
<keyword id="KW-0813">Transport</keyword>
<gene>
    <name evidence="1" type="primary">atpF2</name>
    <name evidence="1" type="synonym">atpG</name>
</gene>
<protein>
    <recommendedName>
        <fullName evidence="1">ATP synthase subunit b', chloroplastic</fullName>
    </recommendedName>
    <alternativeName>
        <fullName evidence="1">ATP synthase F(0) sector subunit b'</fullName>
    </alternativeName>
    <alternativeName>
        <fullName evidence="1">ATPase subunit II</fullName>
    </alternativeName>
</protein>
<proteinExistence type="inferred from homology"/>
<sequence length="158" mass="17769">MIYLPLLLAEEIEGGLFDFNGTLPLMALQFLILMLLLNTIFYKPVTKILDERDEYIRTTLTTASSMLVKADELAAKYEEDLSKARRDAQAKIAASQKDAQSIVSEDIKKAQMNAEKLITEASKQLNIQKEEALKTLEDQVDTLSDQIKTKLLSSQSLK</sequence>
<accession>P51245</accession>